<evidence type="ECO:0000250" key="1"/>
<evidence type="ECO:0000250" key="2">
    <source>
        <dbReference type="UniProtKB" id="A0A286R227"/>
    </source>
</evidence>
<evidence type="ECO:0000250" key="3">
    <source>
        <dbReference type="UniProtKB" id="P17571"/>
    </source>
</evidence>
<evidence type="ECO:0000250" key="4">
    <source>
        <dbReference type="UniProtKB" id="P49050"/>
    </source>
</evidence>
<evidence type="ECO:0000255" key="5"/>
<evidence type="ECO:0000255" key="6">
    <source>
        <dbReference type="PROSITE-ProRule" id="PRU00279"/>
    </source>
</evidence>
<evidence type="ECO:0000255" key="7">
    <source>
        <dbReference type="PROSITE-ProRule" id="PRU00716"/>
    </source>
</evidence>
<evidence type="ECO:0000256" key="8">
    <source>
        <dbReference type="SAM" id="MobiDB-lite"/>
    </source>
</evidence>
<evidence type="ECO:0000269" key="9">
    <source>
    </source>
</evidence>
<evidence type="ECO:0000305" key="10"/>
<feature type="chain" id="PRO_0000166046" description="Nitrate reductase [NADPH]">
    <location>
        <begin position="1"/>
        <end position="982"/>
    </location>
</feature>
<feature type="domain" description="Cytochrome b5 heme-binding" evidence="6">
    <location>
        <begin position="617"/>
        <end position="692"/>
    </location>
</feature>
<feature type="domain" description="FAD-binding FR-type" evidence="7">
    <location>
        <begin position="721"/>
        <end position="836"/>
    </location>
</feature>
<feature type="region of interest" description="Disordered" evidence="8">
    <location>
        <begin position="1"/>
        <end position="128"/>
    </location>
</feature>
<feature type="compositionally biased region" description="Basic and acidic residues" evidence="8">
    <location>
        <begin position="10"/>
        <end position="20"/>
    </location>
</feature>
<feature type="compositionally biased region" description="Low complexity" evidence="8">
    <location>
        <begin position="63"/>
        <end position="110"/>
    </location>
</feature>
<feature type="binding site" evidence="4">
    <location>
        <position position="240"/>
    </location>
    <ligand>
        <name>Mo-molybdopterin</name>
        <dbReference type="ChEBI" id="CHEBI:71302"/>
    </ligand>
    <ligandPart>
        <name>Mo</name>
        <dbReference type="ChEBI" id="CHEBI:28685"/>
    </ligandPart>
</feature>
<feature type="binding site" description="axial binding residue" evidence="6">
    <location>
        <position position="652"/>
    </location>
    <ligand>
        <name>heme</name>
        <dbReference type="ChEBI" id="CHEBI:30413"/>
    </ligand>
    <ligandPart>
        <name>Fe</name>
        <dbReference type="ChEBI" id="CHEBI:18248"/>
    </ligandPart>
</feature>
<feature type="binding site" description="axial binding residue" evidence="6">
    <location>
        <position position="675"/>
    </location>
    <ligand>
        <name>heme</name>
        <dbReference type="ChEBI" id="CHEBI:30413"/>
    </ligand>
    <ligandPart>
        <name>Fe</name>
        <dbReference type="ChEBI" id="CHEBI:18248"/>
    </ligandPart>
</feature>
<feature type="binding site" evidence="2">
    <location>
        <begin position="776"/>
        <end position="779"/>
    </location>
    <ligand>
        <name>FAD</name>
        <dbReference type="ChEBI" id="CHEBI:57692"/>
    </ligand>
</feature>
<feature type="binding site" evidence="2">
    <location>
        <begin position="794"/>
        <end position="798"/>
    </location>
    <ligand>
        <name>FAD</name>
        <dbReference type="ChEBI" id="CHEBI:57692"/>
    </ligand>
</feature>
<feature type="binding site" evidence="2">
    <location>
        <begin position="810"/>
        <end position="812"/>
    </location>
    <ligand>
        <name>FAD</name>
        <dbReference type="ChEBI" id="CHEBI:57692"/>
    </ligand>
</feature>
<feature type="binding site" evidence="3">
    <location>
        <position position="860"/>
    </location>
    <ligand>
        <name>FAD</name>
        <dbReference type="ChEBI" id="CHEBI:57692"/>
    </ligand>
</feature>
<feature type="binding site" evidence="2">
    <location>
        <position position="863"/>
    </location>
    <ligand>
        <name>FAD</name>
        <dbReference type="ChEBI" id="CHEBI:57692"/>
    </ligand>
</feature>
<feature type="binding site" evidence="1">
    <location>
        <begin position="952"/>
        <end position="961"/>
    </location>
    <ligand>
        <name>NADP(+)</name>
        <dbReference type="ChEBI" id="CHEBI:58349"/>
    </ligand>
</feature>
<feature type="disulfide bond" description="Interchain" evidence="5">
    <location>
        <position position="499"/>
    </location>
</feature>
<feature type="mutagenesis site" description="Little loss of enzyme activity." evidence="9">
    <original>H</original>
    <variation>A</variation>
    <location>
        <position position="652"/>
    </location>
</feature>
<feature type="mutagenesis site" description="Loss of enzyme activity." evidence="9">
    <original>H</original>
    <variation>A</variation>
    <location>
        <position position="675"/>
    </location>
</feature>
<feature type="sequence conflict" description="In Ref. 2; EAA32833." evidence="10" ref="2">
    <original>VGCSSREEPQGSGGLLVPH</original>
    <variation>AAAAAAEKNPRGAADYCPSD</variation>
    <location>
        <begin position="31"/>
        <end position="49"/>
    </location>
</feature>
<feature type="sequence conflict" description="In Ref. 2; EAA32833." evidence="10" ref="2">
    <original>I</original>
    <variation>IP</variation>
    <location>
        <position position="139"/>
    </location>
</feature>
<feature type="sequence conflict" description="In Ref. 2; EAA32833." evidence="10" ref="2">
    <original>P</original>
    <variation>L</variation>
    <location>
        <position position="696"/>
    </location>
</feature>
<feature type="sequence conflict" description="In Ref. 2; EAA32833." evidence="10" ref="2">
    <original>AE</original>
    <variation>LR</variation>
    <location>
        <begin position="869"/>
        <end position="870"/>
    </location>
</feature>
<feature type="sequence conflict" description="In Ref. 2; EAA32833." evidence="10" ref="2">
    <original>M</original>
    <variation>E</variation>
    <location>
        <position position="910"/>
    </location>
</feature>
<reference key="1">
    <citation type="journal article" date="1991" name="Mol. Gen. Genet.">
        <title>Nit-3, the structural gene of nitrate reductase in Neurospora crassa: nucleotide sequence and regulation of mRNA synthesis and turnover.</title>
        <authorList>
            <person name="Okamoto P.M."/>
            <person name="Fu Y.-H."/>
            <person name="Marzluf G.A."/>
        </authorList>
    </citation>
    <scope>NUCLEOTIDE SEQUENCE [GENOMIC DNA]</scope>
    <source>
        <strain>ATCC 24698 / 74-OR23-1A / CBS 708.71 / DSM 1257 / FGSC 987</strain>
    </source>
</reference>
<reference key="2">
    <citation type="journal article" date="2003" name="Nature">
        <title>The genome sequence of the filamentous fungus Neurospora crassa.</title>
        <authorList>
            <person name="Galagan J.E."/>
            <person name="Calvo S.E."/>
            <person name="Borkovich K.A."/>
            <person name="Selker E.U."/>
            <person name="Read N.D."/>
            <person name="Jaffe D.B."/>
            <person name="FitzHugh W."/>
            <person name="Ma L.-J."/>
            <person name="Smirnov S."/>
            <person name="Purcell S."/>
            <person name="Rehman B."/>
            <person name="Elkins T."/>
            <person name="Engels R."/>
            <person name="Wang S."/>
            <person name="Nielsen C.B."/>
            <person name="Butler J."/>
            <person name="Endrizzi M."/>
            <person name="Qui D."/>
            <person name="Ianakiev P."/>
            <person name="Bell-Pedersen D."/>
            <person name="Nelson M.A."/>
            <person name="Werner-Washburne M."/>
            <person name="Selitrennikoff C.P."/>
            <person name="Kinsey J.A."/>
            <person name="Braun E.L."/>
            <person name="Zelter A."/>
            <person name="Schulte U."/>
            <person name="Kothe G.O."/>
            <person name="Jedd G."/>
            <person name="Mewes H.-W."/>
            <person name="Staben C."/>
            <person name="Marcotte E."/>
            <person name="Greenberg D."/>
            <person name="Roy A."/>
            <person name="Foley K."/>
            <person name="Naylor J."/>
            <person name="Stange-Thomann N."/>
            <person name="Barrett R."/>
            <person name="Gnerre S."/>
            <person name="Kamal M."/>
            <person name="Kamvysselis M."/>
            <person name="Mauceli E.W."/>
            <person name="Bielke C."/>
            <person name="Rudd S."/>
            <person name="Frishman D."/>
            <person name="Krystofova S."/>
            <person name="Rasmussen C."/>
            <person name="Metzenberg R.L."/>
            <person name="Perkins D.D."/>
            <person name="Kroken S."/>
            <person name="Cogoni C."/>
            <person name="Macino G."/>
            <person name="Catcheside D.E.A."/>
            <person name="Li W."/>
            <person name="Pratt R.J."/>
            <person name="Osmani S.A."/>
            <person name="DeSouza C.P.C."/>
            <person name="Glass N.L."/>
            <person name="Orbach M.J."/>
            <person name="Berglund J.A."/>
            <person name="Voelker R."/>
            <person name="Yarden O."/>
            <person name="Plamann M."/>
            <person name="Seiler S."/>
            <person name="Dunlap J.C."/>
            <person name="Radford A."/>
            <person name="Aramayo R."/>
            <person name="Natvig D.O."/>
            <person name="Alex L.A."/>
            <person name="Mannhaupt G."/>
            <person name="Ebbole D.J."/>
            <person name="Freitag M."/>
            <person name="Paulsen I."/>
            <person name="Sachs M.S."/>
            <person name="Lander E.S."/>
            <person name="Nusbaum C."/>
            <person name="Birren B.W."/>
        </authorList>
    </citation>
    <scope>NUCLEOTIDE SEQUENCE [LARGE SCALE GENOMIC DNA]</scope>
    <source>
        <strain>ATCC 24698 / 74-OR23-1A / CBS 708.71 / DSM 1257 / FGSC 987</strain>
    </source>
</reference>
<reference key="3">
    <citation type="journal article" date="1983" name="EMBO J.">
        <title>On the presence of a heme-binding domain homologous to cytochrome b5 in Neurospora crassa assimilatory nitrate reductase.</title>
        <authorList>
            <person name="Le K.H.D."/>
            <person name="Lederer F."/>
        </authorList>
    </citation>
    <scope>PRELIMINARY PARTIAL PROTEIN SEQUENCE</scope>
</reference>
<reference key="4">
    <citation type="journal article" date="1993" name="Mol. Gen. Genet.">
        <title>Molecular characterization of conventional and new repeat-induced mutants of nit-3, the structural gene that encodes nitrate reductase in Neurospora crassa.</title>
        <authorList>
            <person name="Okamoto P.M."/>
            <person name="Garrett R.H."/>
            <person name="Marzluf G.A."/>
        </authorList>
    </citation>
    <scope>MUTANTS</scope>
    <source>
        <strain>ATCC 24698 / 74-OR23-1A / CBS 708.71 / DSM 1257 / FGSC 987</strain>
    </source>
</reference>
<reference key="5">
    <citation type="journal article" date="1993" name="Mol. Gen. Genet.">
        <title>Nitrate reductase of Neurospora crassa: the functional role of individual amino acids in the heme domain as examined by site-directed mutagenesis.</title>
        <authorList>
            <person name="Okamoto P.M."/>
            <person name="Marzluf G.A."/>
        </authorList>
    </citation>
    <scope>MUTAGENESIS</scope>
</reference>
<name>NIA_NEUCR</name>
<gene>
    <name type="primary">nit-3</name>
    <name type="ORF">NCU05298</name>
</gene>
<protein>
    <recommendedName>
        <fullName>Nitrate reductase [NADPH]</fullName>
        <shortName>NR</shortName>
        <ecNumber>1.7.1.3</ecNumber>
    </recommendedName>
</protein>
<dbReference type="EC" id="1.7.1.3"/>
<dbReference type="EMBL" id="X61303">
    <property type="protein sequence ID" value="CAA43600.1"/>
    <property type="molecule type" value="Genomic_DNA"/>
</dbReference>
<dbReference type="EMBL" id="CM002239">
    <property type="protein sequence ID" value="EAA32833.1"/>
    <property type="molecule type" value="Genomic_DNA"/>
</dbReference>
<dbReference type="PIR" id="S16292">
    <property type="entry name" value="S16292"/>
</dbReference>
<dbReference type="RefSeq" id="XP_962069.1">
    <property type="nucleotide sequence ID" value="XM_956976.2"/>
</dbReference>
<dbReference type="SMR" id="P08619"/>
<dbReference type="STRING" id="367110.P08619"/>
<dbReference type="PaxDb" id="5141-EFNCRP00000005051"/>
<dbReference type="EnsemblFungi" id="EAA32833">
    <property type="protein sequence ID" value="EAA32833"/>
    <property type="gene ID" value="NCU05298"/>
</dbReference>
<dbReference type="GeneID" id="3878217"/>
<dbReference type="KEGG" id="ncr:NCU05298"/>
<dbReference type="HOGENOM" id="CLU_003827_4_0_1"/>
<dbReference type="InParanoid" id="P08619"/>
<dbReference type="OrthoDB" id="432685at2759"/>
<dbReference type="BioCyc" id="MetaCyc:MONOMER-13438"/>
<dbReference type="BRENDA" id="1.7.1.3">
    <property type="organism ID" value="3627"/>
</dbReference>
<dbReference type="UniPathway" id="UPA00653"/>
<dbReference type="Proteomes" id="UP000001805">
    <property type="component" value="Chromosome 4, Linkage Group IV"/>
</dbReference>
<dbReference type="GO" id="GO:0071949">
    <property type="term" value="F:FAD binding"/>
    <property type="evidence" value="ECO:0000250"/>
    <property type="project" value="UniProtKB"/>
</dbReference>
<dbReference type="GO" id="GO:0020037">
    <property type="term" value="F:heme binding"/>
    <property type="evidence" value="ECO:0007669"/>
    <property type="project" value="InterPro"/>
</dbReference>
<dbReference type="GO" id="GO:0030151">
    <property type="term" value="F:molybdenum ion binding"/>
    <property type="evidence" value="ECO:0000250"/>
    <property type="project" value="UniProtKB"/>
</dbReference>
<dbReference type="GO" id="GO:0043546">
    <property type="term" value="F:molybdopterin cofactor binding"/>
    <property type="evidence" value="ECO:0007669"/>
    <property type="project" value="InterPro"/>
</dbReference>
<dbReference type="GO" id="GO:0050464">
    <property type="term" value="F:nitrate reductase (NADPH) activity"/>
    <property type="evidence" value="ECO:0007669"/>
    <property type="project" value="UniProtKB-EC"/>
</dbReference>
<dbReference type="GO" id="GO:0042128">
    <property type="term" value="P:nitrate assimilation"/>
    <property type="evidence" value="ECO:0007669"/>
    <property type="project" value="UniProtKB-UniPathway"/>
</dbReference>
<dbReference type="CDD" id="cd06183">
    <property type="entry name" value="cyt_b5_reduct_like"/>
    <property type="match status" value="1"/>
</dbReference>
<dbReference type="CDD" id="cd02112">
    <property type="entry name" value="eukary_NR_Moco"/>
    <property type="match status" value="1"/>
</dbReference>
<dbReference type="FunFam" id="2.60.40.650:FF:000001">
    <property type="entry name" value="Nitrate reductase"/>
    <property type="match status" value="1"/>
</dbReference>
<dbReference type="FunFam" id="3.10.120.10:FF:000016">
    <property type="entry name" value="Nitrate reductase"/>
    <property type="match status" value="1"/>
</dbReference>
<dbReference type="FunFam" id="3.90.420.10:FF:000005">
    <property type="entry name" value="Nitrate reductase"/>
    <property type="match status" value="1"/>
</dbReference>
<dbReference type="Gene3D" id="2.60.40.650">
    <property type="match status" value="1"/>
</dbReference>
<dbReference type="Gene3D" id="3.10.120.10">
    <property type="entry name" value="Cytochrome b5-like heme/steroid binding domain"/>
    <property type="match status" value="1"/>
</dbReference>
<dbReference type="Gene3D" id="3.40.50.80">
    <property type="entry name" value="Nucleotide-binding domain of ferredoxin-NADP reductase (FNR) module"/>
    <property type="match status" value="1"/>
</dbReference>
<dbReference type="Gene3D" id="3.90.420.10">
    <property type="entry name" value="Oxidoreductase, molybdopterin-binding domain"/>
    <property type="match status" value="1"/>
</dbReference>
<dbReference type="Gene3D" id="2.40.30.10">
    <property type="entry name" value="Translation factors"/>
    <property type="match status" value="1"/>
</dbReference>
<dbReference type="InterPro" id="IPR008333">
    <property type="entry name" value="Cbr1-like_FAD-bd_dom"/>
</dbReference>
<dbReference type="InterPro" id="IPR001199">
    <property type="entry name" value="Cyt_B5-like_heme/steroid-bd"/>
</dbReference>
<dbReference type="InterPro" id="IPR036400">
    <property type="entry name" value="Cyt_B5-like_heme/steroid_sf"/>
</dbReference>
<dbReference type="InterPro" id="IPR018506">
    <property type="entry name" value="Cyt_B5_heme-BS"/>
</dbReference>
<dbReference type="InterPro" id="IPR017927">
    <property type="entry name" value="FAD-bd_FR_type"/>
</dbReference>
<dbReference type="InterPro" id="IPR039261">
    <property type="entry name" value="FNR_nucleotide-bd"/>
</dbReference>
<dbReference type="InterPro" id="IPR014756">
    <property type="entry name" value="Ig_E-set"/>
</dbReference>
<dbReference type="InterPro" id="IPR005066">
    <property type="entry name" value="MoCF_OxRdtse_dimer"/>
</dbReference>
<dbReference type="InterPro" id="IPR008335">
    <property type="entry name" value="Mopterin_OxRdtase_euk"/>
</dbReference>
<dbReference type="InterPro" id="IPR001433">
    <property type="entry name" value="OxRdtase_FAD/NAD-bd"/>
</dbReference>
<dbReference type="InterPro" id="IPR000572">
    <property type="entry name" value="OxRdtase_Mopterin-bd_dom"/>
</dbReference>
<dbReference type="InterPro" id="IPR036374">
    <property type="entry name" value="OxRdtase_Mopterin-bd_sf"/>
</dbReference>
<dbReference type="InterPro" id="IPR022407">
    <property type="entry name" value="OxRdtase_Mopterin_BS"/>
</dbReference>
<dbReference type="InterPro" id="IPR017938">
    <property type="entry name" value="Riboflavin_synthase-like_b-brl"/>
</dbReference>
<dbReference type="PANTHER" id="PTHR19372:SF7">
    <property type="entry name" value="SULFITE OXIDASE, MITOCHONDRIAL"/>
    <property type="match status" value="1"/>
</dbReference>
<dbReference type="PANTHER" id="PTHR19372">
    <property type="entry name" value="SULFITE REDUCTASE"/>
    <property type="match status" value="1"/>
</dbReference>
<dbReference type="Pfam" id="PF00173">
    <property type="entry name" value="Cyt-b5"/>
    <property type="match status" value="1"/>
</dbReference>
<dbReference type="Pfam" id="PF00970">
    <property type="entry name" value="FAD_binding_6"/>
    <property type="match status" value="1"/>
</dbReference>
<dbReference type="Pfam" id="PF03404">
    <property type="entry name" value="Mo-co_dimer"/>
    <property type="match status" value="1"/>
</dbReference>
<dbReference type="Pfam" id="PF00175">
    <property type="entry name" value="NAD_binding_1"/>
    <property type="match status" value="1"/>
</dbReference>
<dbReference type="Pfam" id="PF00174">
    <property type="entry name" value="Oxidored_molyb"/>
    <property type="match status" value="1"/>
</dbReference>
<dbReference type="PRINTS" id="PR00406">
    <property type="entry name" value="CYTB5RDTASE"/>
</dbReference>
<dbReference type="PRINTS" id="PR00363">
    <property type="entry name" value="CYTOCHROMEB5"/>
</dbReference>
<dbReference type="PRINTS" id="PR00407">
    <property type="entry name" value="EUMOPTERIN"/>
</dbReference>
<dbReference type="SMART" id="SM01117">
    <property type="entry name" value="Cyt-b5"/>
    <property type="match status" value="1"/>
</dbReference>
<dbReference type="SUPFAM" id="SSF55856">
    <property type="entry name" value="Cytochrome b5-like heme/steroid binding domain"/>
    <property type="match status" value="1"/>
</dbReference>
<dbReference type="SUPFAM" id="SSF81296">
    <property type="entry name" value="E set domains"/>
    <property type="match status" value="1"/>
</dbReference>
<dbReference type="SUPFAM" id="SSF52343">
    <property type="entry name" value="Ferredoxin reductase-like, C-terminal NADP-linked domain"/>
    <property type="match status" value="1"/>
</dbReference>
<dbReference type="SUPFAM" id="SSF56524">
    <property type="entry name" value="Oxidoreductase molybdopterin-binding domain"/>
    <property type="match status" value="1"/>
</dbReference>
<dbReference type="SUPFAM" id="SSF63380">
    <property type="entry name" value="Riboflavin synthase domain-like"/>
    <property type="match status" value="1"/>
</dbReference>
<dbReference type="PROSITE" id="PS00191">
    <property type="entry name" value="CYTOCHROME_B5_1"/>
    <property type="match status" value="1"/>
</dbReference>
<dbReference type="PROSITE" id="PS50255">
    <property type="entry name" value="CYTOCHROME_B5_2"/>
    <property type="match status" value="1"/>
</dbReference>
<dbReference type="PROSITE" id="PS51384">
    <property type="entry name" value="FAD_FR"/>
    <property type="match status" value="1"/>
</dbReference>
<dbReference type="PROSITE" id="PS00559">
    <property type="entry name" value="MOLYBDOPTERIN_EUK"/>
    <property type="match status" value="1"/>
</dbReference>
<organism>
    <name type="scientific">Neurospora crassa (strain ATCC 24698 / 74-OR23-1A / CBS 708.71 / DSM 1257 / FGSC 987)</name>
    <dbReference type="NCBI Taxonomy" id="367110"/>
    <lineage>
        <taxon>Eukaryota</taxon>
        <taxon>Fungi</taxon>
        <taxon>Dikarya</taxon>
        <taxon>Ascomycota</taxon>
        <taxon>Pezizomycotina</taxon>
        <taxon>Sordariomycetes</taxon>
        <taxon>Sordariomycetidae</taxon>
        <taxon>Sordariales</taxon>
        <taxon>Sordariaceae</taxon>
        <taxon>Neurospora</taxon>
    </lineage>
</organism>
<sequence>MEAPALEQRQSLHDSSERQQRFTSLILPNGVGCSSREEPQGSGGLLVPHNDNDIDNDLASTRTASPTTTDFSSSSSDDNSTTLETSVNYSHSSNTNTNTSCPPSPITSSSLKPAYPLPPPSTRLTTILPTDLKTPDHLIRDPRLIRLTGSHPFNVEPPLTALFEHGFLTPQNLHYVRNHGPIPSSVATPPATINKEEDDSLLNWEFTVEGLVEHPLKISVRELMDASKWDNVTYPVTLVCAGNRRKEQNVLRKSKGFSWGAGGLSTALWTGVGLSEILARAKPLTKKGGGARYVCFEGADQLPNGTYGTSVKLAWAMDPNKGIMVAHKMNGENLHPDHGRPVRVVVPGQIGGRSVKWLKRIVVTKGPSENWYHVFDNRVLPTTVGPEESGEKTEEMERVWRDERYAIYDLNVNSVICEPGHGEVVSLRGDEGAGTYRLRGYAYAGGGRRVTRLEVTLDQGKSWRLAGIEYPEDRYREAQDGEELFGGRLDVSWRESCFCWCFWDLEIPLSELRKAKDVCIRAMDESLALQPKEMYWSVLGMMNNPWFRVVIHHEGDTLRFEHPTQPMLTSDGWMDRVKKEGGNLANGFWGEKVPGAEENVVKEEPVKEISMVDEKVTRLITLEELRQHDGEEEPWFVVNGQVYNGTPFLEGHPGGAASITGAAGQDVTDEFLAIHSENAKAMMPTYHIGTLTPSAPAALKSSSTSDPALSDPSRPIFLQSKTWNSAILTFKESVSPDTKIFHFALSHPAQSIGLPVGQHLMMRLPDPAKPTESIIRAYTPISDGTLERGTLRVLVKIYYASPTEDIKGGQMTQALDALALGKAVEFKGPVGKFVYQGRGVCSVNGRERKVKRFVMVCGGSGVTPIYQVAEAVAVDDQDGTECLVLDGNRVEGDILMKSELDELVERAKPMGRCRVKYTLSRPGAEWEGLRGRLDKTMLEREVGEGDLRGETMVLLCGPEGMQNMVREVLKGMGWKDEDVLVF</sequence>
<accession>P08619</accession>
<accession>Q7RVF6</accession>
<keyword id="KW-0903">Direct protein sequencing</keyword>
<keyword id="KW-1015">Disulfide bond</keyword>
<keyword id="KW-0274">FAD</keyword>
<keyword id="KW-0285">Flavoprotein</keyword>
<keyword id="KW-0349">Heme</keyword>
<keyword id="KW-0408">Iron</keyword>
<keyword id="KW-0479">Metal-binding</keyword>
<keyword id="KW-0500">Molybdenum</keyword>
<keyword id="KW-0521">NADP</keyword>
<keyword id="KW-0534">Nitrate assimilation</keyword>
<keyword id="KW-0560">Oxidoreductase</keyword>
<keyword id="KW-1185">Reference proteome</keyword>
<proteinExistence type="evidence at protein level"/>
<comment type="function">
    <text>Nitrate reductase is a key enzyme involved in the first step of nitrate assimilation in plants, fungi and bacteria.</text>
</comment>
<comment type="catalytic activity">
    <reaction>
        <text>nitrite + NADP(+) + H2O = nitrate + NADPH + H(+)</text>
        <dbReference type="Rhea" id="RHEA:19061"/>
        <dbReference type="ChEBI" id="CHEBI:15377"/>
        <dbReference type="ChEBI" id="CHEBI:15378"/>
        <dbReference type="ChEBI" id="CHEBI:16301"/>
        <dbReference type="ChEBI" id="CHEBI:17632"/>
        <dbReference type="ChEBI" id="CHEBI:57783"/>
        <dbReference type="ChEBI" id="CHEBI:58349"/>
        <dbReference type="EC" id="1.7.1.3"/>
    </reaction>
</comment>
<comment type="cofactor">
    <cofactor evidence="1">
        <name>FAD</name>
        <dbReference type="ChEBI" id="CHEBI:57692"/>
    </cofactor>
    <text evidence="1">Binds 1 FAD per subunit.</text>
</comment>
<comment type="cofactor">
    <cofactor evidence="1">
        <name>heme</name>
        <dbReference type="ChEBI" id="CHEBI:30413"/>
    </cofactor>
    <text evidence="1">Binds 1 heme group per subunit. The heme group is called cytochrome b-557.</text>
</comment>
<comment type="cofactor">
    <cofactor evidence="1">
        <name>Mo-molybdopterin</name>
        <dbReference type="ChEBI" id="CHEBI:71302"/>
    </cofactor>
    <text evidence="1">Binds 1 Mo-molybdopterin (Mo-MPT) cofactor per subunit.</text>
</comment>
<comment type="pathway">
    <text>Nitrogen metabolism; nitrate reduction (assimilation).</text>
</comment>
<comment type="subunit">
    <text>Homodimer.</text>
</comment>
<comment type="induction">
    <text>Its expression is highly regulated and responds rapidly to nitrate induction and to nitrogen repression.</text>
</comment>
<comment type="similarity">
    <text evidence="10">Belongs to the nitrate reductase family.</text>
</comment>